<accession>Q7NU77</accession>
<protein>
    <recommendedName>
        <fullName evidence="3">4-hydroxyproline 2-epimerase</fullName>
        <shortName>4Hyp 2-epimerase</shortName>
        <shortName evidence="3">4HypE</shortName>
        <ecNumber evidence="2">5.1.1.8</ecNumber>
    </recommendedName>
</protein>
<gene>
    <name evidence="5" type="ordered locus">CV_2826</name>
</gene>
<dbReference type="EC" id="5.1.1.8" evidence="2"/>
<dbReference type="EMBL" id="AE016825">
    <property type="protein sequence ID" value="AAQ60494.2"/>
    <property type="molecule type" value="Genomic_DNA"/>
</dbReference>
<dbReference type="RefSeq" id="WP_011136373.1">
    <property type="nucleotide sequence ID" value="NC_005085.1"/>
</dbReference>
<dbReference type="SMR" id="Q7NU77"/>
<dbReference type="STRING" id="243365.CV_2826"/>
<dbReference type="KEGG" id="cvi:CV_2826"/>
<dbReference type="eggNOG" id="COG3938">
    <property type="taxonomic scope" value="Bacteria"/>
</dbReference>
<dbReference type="HOGENOM" id="CLU_036729_1_0_4"/>
<dbReference type="OrthoDB" id="181267at2"/>
<dbReference type="SABIO-RK" id="Q7NU77"/>
<dbReference type="Proteomes" id="UP000001424">
    <property type="component" value="Chromosome"/>
</dbReference>
<dbReference type="GO" id="GO:0047580">
    <property type="term" value="F:4-hydroxyproline epimerase activity"/>
    <property type="evidence" value="ECO:0007669"/>
    <property type="project" value="UniProtKB-EC"/>
</dbReference>
<dbReference type="FunFam" id="3.10.310.10:FF:000012">
    <property type="entry name" value="4-hydroxyproline 2-epimerase"/>
    <property type="match status" value="1"/>
</dbReference>
<dbReference type="Gene3D" id="3.10.310.10">
    <property type="entry name" value="Diaminopimelate Epimerase, Chain A, domain 1"/>
    <property type="match status" value="2"/>
</dbReference>
<dbReference type="InterPro" id="IPR008794">
    <property type="entry name" value="Pro_racemase_fam"/>
</dbReference>
<dbReference type="NCBIfam" id="NF010577">
    <property type="entry name" value="PRK13970.1"/>
    <property type="match status" value="1"/>
</dbReference>
<dbReference type="PANTHER" id="PTHR33442">
    <property type="entry name" value="TRANS-3-HYDROXY-L-PROLINE DEHYDRATASE"/>
    <property type="match status" value="1"/>
</dbReference>
<dbReference type="PANTHER" id="PTHR33442:SF1">
    <property type="entry name" value="TRANS-3-HYDROXY-L-PROLINE DEHYDRATASE"/>
    <property type="match status" value="1"/>
</dbReference>
<dbReference type="Pfam" id="PF05544">
    <property type="entry name" value="Pro_racemase"/>
    <property type="match status" value="1"/>
</dbReference>
<dbReference type="PIRSF" id="PIRSF029792">
    <property type="entry name" value="Pro_racemase"/>
    <property type="match status" value="1"/>
</dbReference>
<dbReference type="SFLD" id="SFLDS00028">
    <property type="entry name" value="Proline_Racemase"/>
    <property type="match status" value="1"/>
</dbReference>
<dbReference type="SUPFAM" id="SSF54506">
    <property type="entry name" value="Diaminopimelate epimerase-like"/>
    <property type="match status" value="1"/>
</dbReference>
<reference key="1">
    <citation type="journal article" date="2003" name="Proc. Natl. Acad. Sci. U.S.A.">
        <title>The complete genome sequence of Chromobacterium violaceum reveals remarkable and exploitable bacterial adaptability.</title>
        <authorList>
            <person name="Vasconcelos A.T.R."/>
            <person name="de Almeida D.F."/>
            <person name="Hungria M."/>
            <person name="Guimaraes C.T."/>
            <person name="Antonio R.V."/>
            <person name="Almeida F.C."/>
            <person name="de Almeida L.G.P."/>
            <person name="de Almeida R."/>
            <person name="Alves-Gomes J.A."/>
            <person name="Andrade E.M."/>
            <person name="Araripe J."/>
            <person name="de Araujo M.F.F."/>
            <person name="Astolfi-Filho S."/>
            <person name="Azevedo V."/>
            <person name="Baptista A.J."/>
            <person name="Bataus L.A.M."/>
            <person name="Batista J.S."/>
            <person name="Belo A."/>
            <person name="van den Berg C."/>
            <person name="Bogo M."/>
            <person name="Bonatto S."/>
            <person name="Bordignon J."/>
            <person name="Brigido M.M."/>
            <person name="Brito C.A."/>
            <person name="Brocchi M."/>
            <person name="Burity H.A."/>
            <person name="Camargo A.A."/>
            <person name="Cardoso D.D.P."/>
            <person name="Carneiro N.P."/>
            <person name="Carraro D.M."/>
            <person name="Carvalho C.M.B."/>
            <person name="Cascardo J.C.M."/>
            <person name="Cavada B.S."/>
            <person name="Chueire L.M.O."/>
            <person name="Creczynski-Pasa T.B."/>
            <person name="Cunha-Junior N.C."/>
            <person name="Fagundes N."/>
            <person name="Falcao C.L."/>
            <person name="Fantinatti F."/>
            <person name="Farias I.P."/>
            <person name="Felipe M.S.S."/>
            <person name="Ferrari L.P."/>
            <person name="Ferro J.A."/>
            <person name="Ferro M.I.T."/>
            <person name="Franco G.R."/>
            <person name="Freitas N.S.A."/>
            <person name="Furlan L.R."/>
            <person name="Gazzinelli R.T."/>
            <person name="Gomes E.A."/>
            <person name="Goncalves P.R."/>
            <person name="Grangeiro T.B."/>
            <person name="Grattapaglia D."/>
            <person name="Grisard E.C."/>
            <person name="Hanna E.S."/>
            <person name="Jardim S.N."/>
            <person name="Laurino J."/>
            <person name="Leoi L.C.T."/>
            <person name="Lima L.F.A."/>
            <person name="Loureiro M.F."/>
            <person name="Lyra M.C.C.P."/>
            <person name="Madeira H.M.F."/>
            <person name="Manfio G.P."/>
            <person name="Maranhao A.Q."/>
            <person name="Martins W.S."/>
            <person name="di Mauro S.M.Z."/>
            <person name="de Medeiros S.R.B."/>
            <person name="Meissner R.V."/>
            <person name="Moreira M.A.M."/>
            <person name="Nascimento F.F."/>
            <person name="Nicolas M.F."/>
            <person name="Oliveira J.G."/>
            <person name="Oliveira S.C."/>
            <person name="Paixao R.F.C."/>
            <person name="Parente J.A."/>
            <person name="Pedrosa F.O."/>
            <person name="Pena S.D.J."/>
            <person name="Pereira J.O."/>
            <person name="Pereira M."/>
            <person name="Pinto L.S.R.C."/>
            <person name="Pinto L.S."/>
            <person name="Porto J.I.R."/>
            <person name="Potrich D.P."/>
            <person name="Ramalho-Neto C.E."/>
            <person name="Reis A.M.M."/>
            <person name="Rigo L.U."/>
            <person name="Rondinelli E."/>
            <person name="Santos E.B.P."/>
            <person name="Santos F.R."/>
            <person name="Schneider M.P.C."/>
            <person name="Seuanez H.N."/>
            <person name="Silva A.M.R."/>
            <person name="da Silva A.L.C."/>
            <person name="Silva D.W."/>
            <person name="Silva R."/>
            <person name="Simoes I.C."/>
            <person name="Simon D."/>
            <person name="Soares C.M.A."/>
            <person name="Soares R.B.A."/>
            <person name="Souza E.M."/>
            <person name="Souza K.R.L."/>
            <person name="Souza R.C."/>
            <person name="Steffens M.B.R."/>
            <person name="Steindel M."/>
            <person name="Teixeira S.R."/>
            <person name="Urmenyi T."/>
            <person name="Vettore A."/>
            <person name="Wassem R."/>
            <person name="Zaha A."/>
            <person name="Simpson A.J.G."/>
        </authorList>
    </citation>
    <scope>NUCLEOTIDE SEQUENCE [LARGE SCALE GENOMIC DNA]</scope>
    <source>
        <strain>ATCC 12472 / DSM 30191 / JCM 1249 / CCUG 213 / NBRC 12614 / NCIMB 9131 / NCTC 9757 / MK</strain>
    </source>
</reference>
<reference key="2">
    <citation type="journal article" date="2014" name="Elife">
        <title>Prediction and characterization of enzymatic activities guided by sequence similarity and genome neighborhood networks.</title>
        <authorList>
            <person name="Zhao S."/>
            <person name="Sakai A."/>
            <person name="Zhang X."/>
            <person name="Vetting M.W."/>
            <person name="Kumar R."/>
            <person name="Hillerich B."/>
            <person name="San Francisco B."/>
            <person name="Solbiati J."/>
            <person name="Steves A."/>
            <person name="Brown S."/>
            <person name="Akiva E."/>
            <person name="Barber A."/>
            <person name="Seidel R.D."/>
            <person name="Babbitt P.C."/>
            <person name="Almo S.C."/>
            <person name="Gerlt J.A."/>
            <person name="Jacobson M.P."/>
        </authorList>
    </citation>
    <scope>FUNCTION</scope>
    <scope>CATALYTIC ACTIVITY</scope>
    <scope>BIOPHYSICOCHEMICAL PROPERTIES</scope>
</reference>
<sequence>MKQVEIIDSHTGGEPTRLVLSGFPALAGATMADKRDALRERHDQWRRACLLEPRGSDVLVGALYCEPVSPDAACGVIFFNNTGYIGMCGHGTIGLIASLHCLGRIAPGAHKIDTPVGPVDAVLHEDGSVTLRNVPAYRYRRQAAVEVPGHGTVIGDIAWGGNWFFLVAEHGLSVRLDNVAALSAFSCATMQALEEQGITGADGARIDHVELFADDEQADSRNFVMCPGKAYDRSPCGTGTSAKLACLAADGKLAEGEQWVQAGITGSRFVGHYQREGDFIRPYITGRAHITARAMLLIDEQDPFAWGI</sequence>
<evidence type="ECO:0000250" key="1">
    <source>
        <dbReference type="UniProtKB" id="Q4KGU2"/>
    </source>
</evidence>
<evidence type="ECO:0000269" key="2">
    <source>
    </source>
</evidence>
<evidence type="ECO:0000303" key="3">
    <source>
    </source>
</evidence>
<evidence type="ECO:0000305" key="4"/>
<evidence type="ECO:0000312" key="5">
    <source>
        <dbReference type="EMBL" id="AAQ60494.2"/>
    </source>
</evidence>
<keyword id="KW-0413">Isomerase</keyword>
<keyword id="KW-1185">Reference proteome</keyword>
<feature type="chain" id="PRO_0000432284" description="4-hydroxyproline 2-epimerase">
    <location>
        <begin position="1"/>
        <end position="308"/>
    </location>
</feature>
<feature type="active site" description="Proton acceptor" evidence="1">
    <location>
        <position position="88"/>
    </location>
</feature>
<feature type="active site" description="Proton donor" evidence="1">
    <location>
        <position position="236"/>
    </location>
</feature>
<feature type="binding site" evidence="1">
    <location>
        <begin position="89"/>
        <end position="90"/>
    </location>
    <ligand>
        <name>substrate</name>
    </ligand>
</feature>
<feature type="binding site" evidence="1">
    <location>
        <position position="208"/>
    </location>
    <ligand>
        <name>substrate</name>
    </ligand>
</feature>
<feature type="binding site" evidence="1">
    <location>
        <position position="232"/>
    </location>
    <ligand>
        <name>substrate</name>
    </ligand>
</feature>
<feature type="binding site" evidence="1">
    <location>
        <begin position="237"/>
        <end position="238"/>
    </location>
    <ligand>
        <name>substrate</name>
    </ligand>
</feature>
<organism>
    <name type="scientific">Chromobacterium violaceum (strain ATCC 12472 / DSM 30191 / JCM 1249 / CCUG 213 / NBRC 12614 / NCIMB 9131 / NCTC 9757 / MK)</name>
    <dbReference type="NCBI Taxonomy" id="243365"/>
    <lineage>
        <taxon>Bacteria</taxon>
        <taxon>Pseudomonadati</taxon>
        <taxon>Pseudomonadota</taxon>
        <taxon>Betaproteobacteria</taxon>
        <taxon>Neisseriales</taxon>
        <taxon>Chromobacteriaceae</taxon>
        <taxon>Chromobacterium</taxon>
    </lineage>
</organism>
<name>4HYPE_CHRVO</name>
<comment type="function">
    <text evidence="2">Catalyzes the epimerization of trans-4-hydroxy-L-proline (t4LHyp) to cis-4-hydroxy-D-proline (c4DHyp). Is likely involved in a degradation pathway that converts t4LHyp to alpha-ketoglutarate. Can also catalyze the epimerization of trans-3-hydroxy-L-proline (t3LHyp) to cis-3-hydroxy-D-proline (c3DHyp), albeit with 19-fold lower efficiency. Displays no proline racemase activity.</text>
</comment>
<comment type="catalytic activity">
    <reaction evidence="2">
        <text>trans-4-hydroxy-L-proline = cis-4-hydroxy-D-proline</text>
        <dbReference type="Rhea" id="RHEA:21152"/>
        <dbReference type="ChEBI" id="CHEBI:57690"/>
        <dbReference type="ChEBI" id="CHEBI:58375"/>
        <dbReference type="EC" id="5.1.1.8"/>
    </reaction>
</comment>
<comment type="biophysicochemical properties">
    <kinetics>
        <KM evidence="2">6.8 mM for trans-4-hydroxy-L-proline</KM>
        <KM evidence="2">57 mM for trans-3-hydroxy-L-proline</KM>
        <text evidence="2">kcat is 70 sec(-1) for t4LHyp epimerization. kcat is 30 sec(-1) for t3LHyp epimerization.</text>
    </kinetics>
</comment>
<comment type="similarity">
    <text evidence="4">Belongs to the proline racemase family.</text>
</comment>
<proteinExistence type="evidence at protein level"/>